<comment type="function">
    <text evidence="1">The RuvA-RuvB-RuvC complex processes Holliday junction (HJ) DNA during genetic recombination and DNA repair. Endonuclease that resolves HJ intermediates. Cleaves cruciform DNA by making single-stranded nicks across the HJ at symmetrical positions within the homologous arms, yielding a 5'-phosphate and a 3'-hydroxyl group; requires a central core of homology in the junction. The consensus cleavage sequence is 5'-(A/T)TT(C/G)-3'. Cleavage occurs on the 3'-side of the TT dinucleotide at the point of strand exchange. HJ branch migration catalyzed by RuvA-RuvB allows RuvC to scan DNA until it finds its consensus sequence, where it cleaves and resolves the cruciform DNA.</text>
</comment>
<comment type="catalytic activity">
    <reaction evidence="1">
        <text>Endonucleolytic cleavage at a junction such as a reciprocal single-stranded crossover between two homologous DNA duplexes (Holliday junction).</text>
        <dbReference type="EC" id="3.1.21.10"/>
    </reaction>
</comment>
<comment type="cofactor">
    <cofactor evidence="1">
        <name>Mg(2+)</name>
        <dbReference type="ChEBI" id="CHEBI:18420"/>
    </cofactor>
    <text evidence="1">Binds 2 Mg(2+) ion per subunit.</text>
</comment>
<comment type="subunit">
    <text evidence="1">Homodimer which binds Holliday junction (HJ) DNA. The HJ becomes 2-fold symmetrical on binding to RuvC with unstacked arms; it has a different conformation from HJ DNA in complex with RuvA. In the full resolvosome a probable DNA-RuvA(4)-RuvB(12)-RuvC(2) complex forms which resolves the HJ.</text>
</comment>
<comment type="subcellular location">
    <subcellularLocation>
        <location evidence="1">Cytoplasm</location>
    </subcellularLocation>
</comment>
<comment type="similarity">
    <text evidence="1">Belongs to the RuvC family.</text>
</comment>
<feature type="chain" id="PRO_1000090508" description="Crossover junction endodeoxyribonuclease RuvC">
    <location>
        <begin position="1"/>
        <end position="180"/>
    </location>
</feature>
<feature type="active site" evidence="1">
    <location>
        <position position="7"/>
    </location>
</feature>
<feature type="active site" evidence="1">
    <location>
        <position position="66"/>
    </location>
</feature>
<feature type="active site" evidence="1">
    <location>
        <position position="138"/>
    </location>
</feature>
<feature type="binding site" evidence="1">
    <location>
        <position position="7"/>
    </location>
    <ligand>
        <name>Mg(2+)</name>
        <dbReference type="ChEBI" id="CHEBI:18420"/>
        <label>1</label>
    </ligand>
</feature>
<feature type="binding site" evidence="1">
    <location>
        <position position="66"/>
    </location>
    <ligand>
        <name>Mg(2+)</name>
        <dbReference type="ChEBI" id="CHEBI:18420"/>
        <label>2</label>
    </ligand>
</feature>
<feature type="binding site" evidence="1">
    <location>
        <position position="138"/>
    </location>
    <ligand>
        <name>Mg(2+)</name>
        <dbReference type="ChEBI" id="CHEBI:18420"/>
        <label>1</label>
    </ligand>
</feature>
<protein>
    <recommendedName>
        <fullName evidence="1">Crossover junction endodeoxyribonuclease RuvC</fullName>
        <ecNumber evidence="1">3.1.21.10</ecNumber>
    </recommendedName>
    <alternativeName>
        <fullName evidence="1">Holliday junction nuclease RuvC</fullName>
    </alternativeName>
    <alternativeName>
        <fullName evidence="1">Holliday junction resolvase RuvC</fullName>
    </alternativeName>
</protein>
<sequence>MRILGIDPGLRVTGFGVIDVSGHQLAYVASGVIRTPTADLATRLGTIFAGVSTLVREHAPDQAAIEKVFVNVNPQSTLLLGQARGAAICGLVSGGLPVAEYTALQLKQAIVGYGRATKAQMQEMVTRLLSLSGQPGSDAADALGIAICHAHGGNTLSTLGGLAPALAQKGLRLRRGRLVG</sequence>
<dbReference type="EC" id="3.1.21.10" evidence="1"/>
<dbReference type="EMBL" id="CP000868">
    <property type="protein sequence ID" value="ABX16378.1"/>
    <property type="molecule type" value="Genomic_DNA"/>
</dbReference>
<dbReference type="EMBL" id="AP009385">
    <property type="protein sequence ID" value="BAG42508.1"/>
    <property type="molecule type" value="Genomic_DNA"/>
</dbReference>
<dbReference type="RefSeq" id="WP_006401677.1">
    <property type="nucleotide sequence ID" value="NC_010804.1"/>
</dbReference>
<dbReference type="SMR" id="A9AH71"/>
<dbReference type="STRING" id="395019.BMULJ_00544"/>
<dbReference type="GeneID" id="89568972"/>
<dbReference type="KEGG" id="bmj:BMULJ_00544"/>
<dbReference type="KEGG" id="bmu:Bmul_2694"/>
<dbReference type="eggNOG" id="COG0817">
    <property type="taxonomic scope" value="Bacteria"/>
</dbReference>
<dbReference type="HOGENOM" id="CLU_091257_2_0_4"/>
<dbReference type="Proteomes" id="UP000008815">
    <property type="component" value="Chromosome 1"/>
</dbReference>
<dbReference type="GO" id="GO:0005737">
    <property type="term" value="C:cytoplasm"/>
    <property type="evidence" value="ECO:0007669"/>
    <property type="project" value="UniProtKB-SubCell"/>
</dbReference>
<dbReference type="GO" id="GO:0048476">
    <property type="term" value="C:Holliday junction resolvase complex"/>
    <property type="evidence" value="ECO:0007669"/>
    <property type="project" value="UniProtKB-UniRule"/>
</dbReference>
<dbReference type="GO" id="GO:0008821">
    <property type="term" value="F:crossover junction DNA endonuclease activity"/>
    <property type="evidence" value="ECO:0007669"/>
    <property type="project" value="UniProtKB-UniRule"/>
</dbReference>
<dbReference type="GO" id="GO:0003677">
    <property type="term" value="F:DNA binding"/>
    <property type="evidence" value="ECO:0007669"/>
    <property type="project" value="UniProtKB-KW"/>
</dbReference>
<dbReference type="GO" id="GO:0000287">
    <property type="term" value="F:magnesium ion binding"/>
    <property type="evidence" value="ECO:0007669"/>
    <property type="project" value="UniProtKB-UniRule"/>
</dbReference>
<dbReference type="GO" id="GO:0006310">
    <property type="term" value="P:DNA recombination"/>
    <property type="evidence" value="ECO:0007669"/>
    <property type="project" value="UniProtKB-UniRule"/>
</dbReference>
<dbReference type="GO" id="GO:0006281">
    <property type="term" value="P:DNA repair"/>
    <property type="evidence" value="ECO:0007669"/>
    <property type="project" value="UniProtKB-UniRule"/>
</dbReference>
<dbReference type="CDD" id="cd16962">
    <property type="entry name" value="RuvC"/>
    <property type="match status" value="1"/>
</dbReference>
<dbReference type="FunFam" id="3.30.420.10:FF:000002">
    <property type="entry name" value="Crossover junction endodeoxyribonuclease RuvC"/>
    <property type="match status" value="1"/>
</dbReference>
<dbReference type="Gene3D" id="3.30.420.10">
    <property type="entry name" value="Ribonuclease H-like superfamily/Ribonuclease H"/>
    <property type="match status" value="1"/>
</dbReference>
<dbReference type="HAMAP" id="MF_00034">
    <property type="entry name" value="RuvC"/>
    <property type="match status" value="1"/>
</dbReference>
<dbReference type="InterPro" id="IPR012337">
    <property type="entry name" value="RNaseH-like_sf"/>
</dbReference>
<dbReference type="InterPro" id="IPR036397">
    <property type="entry name" value="RNaseH_sf"/>
</dbReference>
<dbReference type="InterPro" id="IPR020563">
    <property type="entry name" value="X-over_junc_endoDNase_Mg_BS"/>
</dbReference>
<dbReference type="InterPro" id="IPR002176">
    <property type="entry name" value="X-over_junc_endoDNase_RuvC"/>
</dbReference>
<dbReference type="NCBIfam" id="TIGR00228">
    <property type="entry name" value="ruvC"/>
    <property type="match status" value="1"/>
</dbReference>
<dbReference type="PANTHER" id="PTHR30194">
    <property type="entry name" value="CROSSOVER JUNCTION ENDODEOXYRIBONUCLEASE RUVC"/>
    <property type="match status" value="1"/>
</dbReference>
<dbReference type="PANTHER" id="PTHR30194:SF3">
    <property type="entry name" value="CROSSOVER JUNCTION ENDODEOXYRIBONUCLEASE RUVC"/>
    <property type="match status" value="1"/>
</dbReference>
<dbReference type="Pfam" id="PF02075">
    <property type="entry name" value="RuvC"/>
    <property type="match status" value="1"/>
</dbReference>
<dbReference type="PRINTS" id="PR00696">
    <property type="entry name" value="RSOLVASERUVC"/>
</dbReference>
<dbReference type="SUPFAM" id="SSF53098">
    <property type="entry name" value="Ribonuclease H-like"/>
    <property type="match status" value="1"/>
</dbReference>
<dbReference type="PROSITE" id="PS01321">
    <property type="entry name" value="RUVC"/>
    <property type="match status" value="1"/>
</dbReference>
<reference key="1">
    <citation type="submission" date="2007-10" db="EMBL/GenBank/DDBJ databases">
        <title>Complete sequence of chromosome 1 of Burkholderia multivorans ATCC 17616.</title>
        <authorList>
            <person name="Copeland A."/>
            <person name="Lucas S."/>
            <person name="Lapidus A."/>
            <person name="Barry K."/>
            <person name="Glavina del Rio T."/>
            <person name="Dalin E."/>
            <person name="Tice H."/>
            <person name="Pitluck S."/>
            <person name="Chain P."/>
            <person name="Malfatti S."/>
            <person name="Shin M."/>
            <person name="Vergez L."/>
            <person name="Schmutz J."/>
            <person name="Larimer F."/>
            <person name="Land M."/>
            <person name="Hauser L."/>
            <person name="Kyrpides N."/>
            <person name="Kim E."/>
            <person name="Tiedje J."/>
            <person name="Richardson P."/>
        </authorList>
    </citation>
    <scope>NUCLEOTIDE SEQUENCE [LARGE SCALE GENOMIC DNA]</scope>
    <source>
        <strain>ATCC 17616 / 249</strain>
    </source>
</reference>
<reference key="2">
    <citation type="submission" date="2007-04" db="EMBL/GenBank/DDBJ databases">
        <title>Complete genome sequence of Burkholderia multivorans ATCC 17616.</title>
        <authorList>
            <person name="Ohtsubo Y."/>
            <person name="Yamashita A."/>
            <person name="Kurokawa K."/>
            <person name="Takami H."/>
            <person name="Yuhara S."/>
            <person name="Nishiyama E."/>
            <person name="Endo R."/>
            <person name="Miyazaki R."/>
            <person name="Ono A."/>
            <person name="Yano K."/>
            <person name="Ito M."/>
            <person name="Sota M."/>
            <person name="Yuji N."/>
            <person name="Hattori M."/>
            <person name="Tsuda M."/>
        </authorList>
    </citation>
    <scope>NUCLEOTIDE SEQUENCE [LARGE SCALE GENOMIC DNA]</scope>
    <source>
        <strain>ATCC 17616 / 249</strain>
    </source>
</reference>
<accession>A9AH71</accession>
<organism>
    <name type="scientific">Burkholderia multivorans (strain ATCC 17616 / 249)</name>
    <dbReference type="NCBI Taxonomy" id="395019"/>
    <lineage>
        <taxon>Bacteria</taxon>
        <taxon>Pseudomonadati</taxon>
        <taxon>Pseudomonadota</taxon>
        <taxon>Betaproteobacteria</taxon>
        <taxon>Burkholderiales</taxon>
        <taxon>Burkholderiaceae</taxon>
        <taxon>Burkholderia</taxon>
        <taxon>Burkholderia cepacia complex</taxon>
    </lineage>
</organism>
<gene>
    <name evidence="1" type="primary">ruvC</name>
    <name type="ordered locus">Bmul_2694</name>
    <name type="ordered locus">BMULJ_00544</name>
</gene>
<name>RUVC_BURM1</name>
<keyword id="KW-0963">Cytoplasm</keyword>
<keyword id="KW-0227">DNA damage</keyword>
<keyword id="KW-0233">DNA recombination</keyword>
<keyword id="KW-0234">DNA repair</keyword>
<keyword id="KW-0238">DNA-binding</keyword>
<keyword id="KW-0255">Endonuclease</keyword>
<keyword id="KW-0378">Hydrolase</keyword>
<keyword id="KW-0460">Magnesium</keyword>
<keyword id="KW-0479">Metal-binding</keyword>
<keyword id="KW-0540">Nuclease</keyword>
<keyword id="KW-1185">Reference proteome</keyword>
<proteinExistence type="inferred from homology"/>
<evidence type="ECO:0000255" key="1">
    <source>
        <dbReference type="HAMAP-Rule" id="MF_00034"/>
    </source>
</evidence>